<name>CRTI_PARSN</name>
<dbReference type="EC" id="1.3.99.31"/>
<dbReference type="EMBL" id="D58420">
    <property type="protein sequence ID" value="BAA09594.2"/>
    <property type="molecule type" value="Genomic_DNA"/>
</dbReference>
<dbReference type="EMBL" id="AB206672">
    <property type="protein sequence ID" value="BAE47468.1"/>
    <property type="molecule type" value="Genomic_DNA"/>
</dbReference>
<dbReference type="SMR" id="P54978"/>
<dbReference type="UniPathway" id="UPA00387"/>
<dbReference type="GO" id="GO:0016627">
    <property type="term" value="F:oxidoreductase activity, acting on the CH-CH group of donors"/>
    <property type="evidence" value="ECO:0007669"/>
    <property type="project" value="UniProtKB-ARBA"/>
</dbReference>
<dbReference type="GO" id="GO:0016117">
    <property type="term" value="P:carotenoid biosynthetic process"/>
    <property type="evidence" value="ECO:0007669"/>
    <property type="project" value="UniProtKB-KW"/>
</dbReference>
<dbReference type="FunFam" id="3.50.50.60:FF:000378">
    <property type="entry name" value="Phytoene desaturase"/>
    <property type="match status" value="1"/>
</dbReference>
<dbReference type="Gene3D" id="3.50.50.60">
    <property type="entry name" value="FAD/NAD(P)-binding domain"/>
    <property type="match status" value="3"/>
</dbReference>
<dbReference type="InterPro" id="IPR002937">
    <property type="entry name" value="Amino_oxidase"/>
</dbReference>
<dbReference type="InterPro" id="IPR014105">
    <property type="entry name" value="Carotenoid/retinoid_OxRdtase"/>
</dbReference>
<dbReference type="InterPro" id="IPR036188">
    <property type="entry name" value="FAD/NAD-bd_sf"/>
</dbReference>
<dbReference type="InterPro" id="IPR008150">
    <property type="entry name" value="Phytoene_DH_bac_CS"/>
</dbReference>
<dbReference type="NCBIfam" id="TIGR02734">
    <property type="entry name" value="crtI_fam"/>
    <property type="match status" value="1"/>
</dbReference>
<dbReference type="PANTHER" id="PTHR43734:SF3">
    <property type="entry name" value="B-CAROTENE KETOLASE"/>
    <property type="match status" value="1"/>
</dbReference>
<dbReference type="PANTHER" id="PTHR43734">
    <property type="entry name" value="PHYTOENE DESATURASE"/>
    <property type="match status" value="1"/>
</dbReference>
<dbReference type="Pfam" id="PF01593">
    <property type="entry name" value="Amino_oxidase"/>
    <property type="match status" value="1"/>
</dbReference>
<dbReference type="SUPFAM" id="SSF51905">
    <property type="entry name" value="FAD/NAD(P)-binding domain"/>
    <property type="match status" value="1"/>
</dbReference>
<dbReference type="PROSITE" id="PS00982">
    <property type="entry name" value="PHYTOENE_DH"/>
    <property type="match status" value="1"/>
</dbReference>
<protein>
    <recommendedName>
        <fullName>Phytoene desaturase (lycopene-forming)</fullName>
        <ecNumber>1.3.99.31</ecNumber>
    </recommendedName>
    <alternativeName>
        <fullName>4-step phytoene desaturase</fullName>
    </alternativeName>
    <alternativeName>
        <fullName>Phytoene dehydrogenase</fullName>
    </alternativeName>
</protein>
<reference key="1">
    <citation type="journal article" date="1995" name="J. Bacteriol.">
        <title>Structure and functional analysis of a marine bacterial carotenoid biosynthesis gene cluster and astaxanthin biosynthetic pathway proposed at the gene level.</title>
        <authorList>
            <person name="Misawa N."/>
            <person name="Satomi Y."/>
            <person name="Kondo K."/>
            <person name="Yokoyama A."/>
            <person name="Kajiwara S."/>
            <person name="Saito T."/>
            <person name="Ohtani T."/>
            <person name="Miki W."/>
        </authorList>
    </citation>
    <scope>NUCLEOTIDE SEQUENCE [GENOMIC DNA]</scope>
</reference>
<reference key="2">
    <citation type="submission" date="2005-03" db="EMBL/GenBank/DDBJ databases">
        <authorList>
            <person name="Misawa N."/>
        </authorList>
    </citation>
    <scope>SEQUENCE REVISION TO 211</scope>
</reference>
<reference key="3">
    <citation type="submission" date="2005-03" db="EMBL/GenBank/DDBJ databases">
        <title>Structure of the complete carotenoid biosynthesis gene cluster of Paracoccus sp. strain N81106.</title>
        <authorList>
            <person name="Maruyama T."/>
            <person name="Inomata Y."/>
            <person name="Haga M."/>
            <person name="Ide T."/>
            <person name="Misawa N."/>
        </authorList>
    </citation>
    <scope>NUCLEOTIDE SEQUENCE [GENOMIC DNA]</scope>
</reference>
<evidence type="ECO:0000250" key="1"/>
<evidence type="ECO:0000255" key="2"/>
<evidence type="ECO:0000305" key="3"/>
<gene>
    <name type="primary">crtI</name>
</gene>
<organism>
    <name type="scientific">Paracoccus sp. (strain N81106 / MBIC 01143)</name>
    <name type="common">Agrobacterium aurantiacum</name>
    <dbReference type="NCBI Taxonomy" id="81397"/>
    <lineage>
        <taxon>Bacteria</taxon>
        <taxon>Pseudomonadati</taxon>
        <taxon>Pseudomonadota</taxon>
        <taxon>Alphaproteobacteria</taxon>
        <taxon>Rhodobacterales</taxon>
        <taxon>Paracoccaceae</taxon>
        <taxon>Paracoccus</taxon>
    </lineage>
</organism>
<sequence>MNAHSPAAKTAIVIGAGFGGLALAIRLQSAGIATTLVEARDKPGGRAYVWHDQGHLFDAGPTVITDPDALKELWALTGQDMARDVTLMPVSPFYRLMWPGGKVFDYVNEADQLERQIAQFNPDDLEGYRRFRDYAEEVYQEGYVKLGTVPFLKLGQMLKAAPALMKLEAYKSVHAKVATFIKDPYLRQAFSYHTLLVGGNPFSTSSIYALIHALERRGGVWFAKGGTNQLVAGMVALFERLGGQMLLNAKVARIDTDGPRATGVTLADGRALTADMVASNGDVMHNYRDLLGHTARGQSRAKSLNAKRWSMSLFVLHFGLREAPKDVAHHTILFGPRYKELVNEIFKGPKLAEDFSLYLHSPCTTDPEMAPPGMSTHYVLAPVPHLGRADIDWAVEGPRYADRILASLEERLIPNLRANLTTTRIFTPSDFASELNAHHGSAFSVEPILTQSAWFRPHNRDKTIRNFYLVGAGTHPGAGIPGVVGSAKATAQVMLSDLASA</sequence>
<comment type="function">
    <text evidence="1">This enzyme converts phytoene into lycopene via the intermediaries of phytofluene, zeta-carotene and neurosporene by the introduction of four double bonds.</text>
</comment>
<comment type="catalytic activity">
    <reaction>
        <text>15-cis-phytoene + 4 A = all-trans-lycopene + 4 AH2</text>
        <dbReference type="Rhea" id="RHEA:15585"/>
        <dbReference type="ChEBI" id="CHEBI:13193"/>
        <dbReference type="ChEBI" id="CHEBI:15948"/>
        <dbReference type="ChEBI" id="CHEBI:17499"/>
        <dbReference type="ChEBI" id="CHEBI:27787"/>
        <dbReference type="EC" id="1.3.99.31"/>
    </reaction>
</comment>
<comment type="cofactor">
    <cofactor evidence="3">
        <name>FAD</name>
        <dbReference type="ChEBI" id="CHEBI:57692"/>
    </cofactor>
</comment>
<comment type="pathway">
    <text>Carotenoid biosynthesis; astaxanthin biosynthesis.</text>
</comment>
<comment type="similarity">
    <text evidence="3">Belongs to the carotenoid/retinoid oxidoreductase family.</text>
</comment>
<accession>P54978</accession>
<accession>Q33DT7</accession>
<feature type="chain" id="PRO_0000067687" description="Phytoene desaturase (lycopene-forming)">
    <location>
        <begin position="1"/>
        <end position="501"/>
    </location>
</feature>
<feature type="binding site" evidence="2">
    <location>
        <begin position="12"/>
        <end position="45"/>
    </location>
    <ligand>
        <name>FAD</name>
        <dbReference type="ChEBI" id="CHEBI:57692"/>
    </ligand>
</feature>
<proteinExistence type="inferred from homology"/>
<keyword id="KW-0125">Carotenoid biosynthesis</keyword>
<keyword id="KW-0274">FAD</keyword>
<keyword id="KW-0285">Flavoprotein</keyword>
<keyword id="KW-0560">Oxidoreductase</keyword>